<accession>A1WS08</accession>
<dbReference type="EC" id="6.1.1.-" evidence="1"/>
<dbReference type="EMBL" id="CP000542">
    <property type="protein sequence ID" value="ABM60415.1"/>
    <property type="molecule type" value="Genomic_DNA"/>
</dbReference>
<dbReference type="RefSeq" id="WP_011812393.1">
    <property type="nucleotide sequence ID" value="NC_008786.1"/>
</dbReference>
<dbReference type="SMR" id="A1WS08"/>
<dbReference type="STRING" id="391735.Veis_4720"/>
<dbReference type="GeneID" id="76462993"/>
<dbReference type="KEGG" id="vei:Veis_4720"/>
<dbReference type="eggNOG" id="COG0008">
    <property type="taxonomic scope" value="Bacteria"/>
</dbReference>
<dbReference type="HOGENOM" id="CLU_015768_0_1_4"/>
<dbReference type="OrthoDB" id="9807503at2"/>
<dbReference type="Proteomes" id="UP000000374">
    <property type="component" value="Chromosome"/>
</dbReference>
<dbReference type="GO" id="GO:0005829">
    <property type="term" value="C:cytosol"/>
    <property type="evidence" value="ECO:0007669"/>
    <property type="project" value="TreeGrafter"/>
</dbReference>
<dbReference type="GO" id="GO:0005524">
    <property type="term" value="F:ATP binding"/>
    <property type="evidence" value="ECO:0007669"/>
    <property type="project" value="UniProtKB-KW"/>
</dbReference>
<dbReference type="GO" id="GO:0004818">
    <property type="term" value="F:glutamate-tRNA ligase activity"/>
    <property type="evidence" value="ECO:0007669"/>
    <property type="project" value="TreeGrafter"/>
</dbReference>
<dbReference type="GO" id="GO:0008270">
    <property type="term" value="F:zinc ion binding"/>
    <property type="evidence" value="ECO:0007669"/>
    <property type="project" value="UniProtKB-UniRule"/>
</dbReference>
<dbReference type="GO" id="GO:0006424">
    <property type="term" value="P:glutamyl-tRNA aminoacylation"/>
    <property type="evidence" value="ECO:0007669"/>
    <property type="project" value="InterPro"/>
</dbReference>
<dbReference type="GO" id="GO:0006400">
    <property type="term" value="P:tRNA modification"/>
    <property type="evidence" value="ECO:0007669"/>
    <property type="project" value="InterPro"/>
</dbReference>
<dbReference type="Gene3D" id="3.40.50.620">
    <property type="entry name" value="HUPs"/>
    <property type="match status" value="1"/>
</dbReference>
<dbReference type="HAMAP" id="MF_01428">
    <property type="entry name" value="Glu_Q_tRNA_synth"/>
    <property type="match status" value="1"/>
</dbReference>
<dbReference type="InterPro" id="IPR022380">
    <property type="entry name" value="Glu-Q_tRNA(Asp)_Synthase"/>
</dbReference>
<dbReference type="InterPro" id="IPR000924">
    <property type="entry name" value="Glu/Gln-tRNA-synth"/>
</dbReference>
<dbReference type="InterPro" id="IPR020058">
    <property type="entry name" value="Glu/Gln-tRNA-synth_Ib_cat-dom"/>
</dbReference>
<dbReference type="InterPro" id="IPR049940">
    <property type="entry name" value="GluQ/Sye"/>
</dbReference>
<dbReference type="InterPro" id="IPR014729">
    <property type="entry name" value="Rossmann-like_a/b/a_fold"/>
</dbReference>
<dbReference type="NCBIfam" id="NF004313">
    <property type="entry name" value="PRK05710.1-2"/>
    <property type="match status" value="1"/>
</dbReference>
<dbReference type="NCBIfam" id="NF004314">
    <property type="entry name" value="PRK05710.1-3"/>
    <property type="match status" value="1"/>
</dbReference>
<dbReference type="NCBIfam" id="NF004315">
    <property type="entry name" value="PRK05710.1-4"/>
    <property type="match status" value="1"/>
</dbReference>
<dbReference type="NCBIfam" id="TIGR03838">
    <property type="entry name" value="queuosine_YadB"/>
    <property type="match status" value="1"/>
</dbReference>
<dbReference type="PANTHER" id="PTHR43311">
    <property type="entry name" value="GLUTAMATE--TRNA LIGASE"/>
    <property type="match status" value="1"/>
</dbReference>
<dbReference type="PANTHER" id="PTHR43311:SF1">
    <property type="entry name" value="GLUTAMYL-Q TRNA(ASP) SYNTHETASE"/>
    <property type="match status" value="1"/>
</dbReference>
<dbReference type="Pfam" id="PF00749">
    <property type="entry name" value="tRNA-synt_1c"/>
    <property type="match status" value="1"/>
</dbReference>
<dbReference type="PRINTS" id="PR00987">
    <property type="entry name" value="TRNASYNTHGLU"/>
</dbReference>
<dbReference type="SUPFAM" id="SSF52374">
    <property type="entry name" value="Nucleotidylyl transferase"/>
    <property type="match status" value="1"/>
</dbReference>
<feature type="chain" id="PRO_1000024371" description="Glutamyl-Q tRNA(Asp) synthetase">
    <location>
        <begin position="1"/>
        <end position="292"/>
    </location>
</feature>
<feature type="short sequence motif" description="'HIGH' region">
    <location>
        <begin position="12"/>
        <end position="22"/>
    </location>
</feature>
<feature type="short sequence motif" description="'KMSKS' region">
    <location>
        <begin position="240"/>
        <end position="244"/>
    </location>
</feature>
<feature type="binding site" evidence="1">
    <location>
        <begin position="9"/>
        <end position="13"/>
    </location>
    <ligand>
        <name>L-glutamate</name>
        <dbReference type="ChEBI" id="CHEBI:29985"/>
    </ligand>
</feature>
<feature type="binding site" evidence="1">
    <location>
        <position position="45"/>
    </location>
    <ligand>
        <name>L-glutamate</name>
        <dbReference type="ChEBI" id="CHEBI:29985"/>
    </ligand>
</feature>
<feature type="binding site" evidence="1">
    <location>
        <position position="99"/>
    </location>
    <ligand>
        <name>Zn(2+)</name>
        <dbReference type="ChEBI" id="CHEBI:29105"/>
    </ligand>
</feature>
<feature type="binding site" evidence="1">
    <location>
        <position position="101"/>
    </location>
    <ligand>
        <name>Zn(2+)</name>
        <dbReference type="ChEBI" id="CHEBI:29105"/>
    </ligand>
</feature>
<feature type="binding site" evidence="1">
    <location>
        <position position="121"/>
    </location>
    <ligand>
        <name>Zn(2+)</name>
        <dbReference type="ChEBI" id="CHEBI:29105"/>
    </ligand>
</feature>
<feature type="binding site" evidence="1">
    <location>
        <position position="125"/>
    </location>
    <ligand>
        <name>Zn(2+)</name>
        <dbReference type="ChEBI" id="CHEBI:29105"/>
    </ligand>
</feature>
<feature type="binding site" evidence="1">
    <location>
        <position position="184"/>
    </location>
    <ligand>
        <name>L-glutamate</name>
        <dbReference type="ChEBI" id="CHEBI:29985"/>
    </ligand>
</feature>
<feature type="binding site" evidence="1">
    <location>
        <position position="202"/>
    </location>
    <ligand>
        <name>L-glutamate</name>
        <dbReference type="ChEBI" id="CHEBI:29985"/>
    </ligand>
</feature>
<feature type="binding site" evidence="1">
    <location>
        <position position="243"/>
    </location>
    <ligand>
        <name>ATP</name>
        <dbReference type="ChEBI" id="CHEBI:30616"/>
    </ligand>
</feature>
<gene>
    <name evidence="1" type="primary">gluQ</name>
    <name type="ordered locus">Veis_4720</name>
</gene>
<reference key="1">
    <citation type="submission" date="2006-12" db="EMBL/GenBank/DDBJ databases">
        <title>Complete sequence of chromosome 1 of Verminephrobacter eiseniae EF01-2.</title>
        <authorList>
            <person name="Copeland A."/>
            <person name="Lucas S."/>
            <person name="Lapidus A."/>
            <person name="Barry K."/>
            <person name="Detter J.C."/>
            <person name="Glavina del Rio T."/>
            <person name="Dalin E."/>
            <person name="Tice H."/>
            <person name="Pitluck S."/>
            <person name="Chertkov O."/>
            <person name="Brettin T."/>
            <person name="Bruce D."/>
            <person name="Han C."/>
            <person name="Tapia R."/>
            <person name="Gilna P."/>
            <person name="Schmutz J."/>
            <person name="Larimer F."/>
            <person name="Land M."/>
            <person name="Hauser L."/>
            <person name="Kyrpides N."/>
            <person name="Kim E."/>
            <person name="Stahl D."/>
            <person name="Richardson P."/>
        </authorList>
    </citation>
    <scope>NUCLEOTIDE SEQUENCE [LARGE SCALE GENOMIC DNA]</scope>
    <source>
        <strain>EF01-2</strain>
    </source>
</reference>
<organism>
    <name type="scientific">Verminephrobacter eiseniae (strain EF01-2)</name>
    <dbReference type="NCBI Taxonomy" id="391735"/>
    <lineage>
        <taxon>Bacteria</taxon>
        <taxon>Pseudomonadati</taxon>
        <taxon>Pseudomonadota</taxon>
        <taxon>Betaproteobacteria</taxon>
        <taxon>Burkholderiales</taxon>
        <taxon>Comamonadaceae</taxon>
        <taxon>Verminephrobacter</taxon>
    </lineage>
</organism>
<name>GLUQ_VEREI</name>
<evidence type="ECO:0000255" key="1">
    <source>
        <dbReference type="HAMAP-Rule" id="MF_01428"/>
    </source>
</evidence>
<protein>
    <recommendedName>
        <fullName evidence="1">Glutamyl-Q tRNA(Asp) synthetase</fullName>
        <shortName evidence="1">Glu-Q-RSs</shortName>
        <ecNumber evidence="1">6.1.1.-</ecNumber>
    </recommendedName>
</protein>
<proteinExistence type="inferred from homology"/>
<sequence>MQSAHYTGRFAPSPSGPLHAGSLVAAMASYLDARAHQGRWLLRMEDVDEARTVQGAAQDIAASLSQLGMHWDGPVLVQSRRQQHYQRACAQLGERVYACGCTRKEIADSRLGMAADGAAIYPGTCRSGLAAGKRAHALRVRVPEPGQALEQIDFEDRWQGWQRQHLASAVGDFVLRRADGFWAYQLAVVVDDAEQGVTHIVRGADLLGSTARQIYLQSLLGYPTPTYLHLPLVTHADGEKLSKQNGAQALNLNRSLTLLHEAARFLGLEVARVDGVAAFWELAVLAWRRRYL</sequence>
<comment type="function">
    <text evidence="1">Catalyzes the tRNA-independent activation of glutamate in presence of ATP and the subsequent transfer of glutamate onto a tRNA(Asp). Glutamate is transferred on the 2-amino-5-(4,5-dihydroxy-2-cyclopenten-1-yl) moiety of the queuosine in the wobble position of the QUC anticodon.</text>
</comment>
<comment type="cofactor">
    <cofactor evidence="1">
        <name>Zn(2+)</name>
        <dbReference type="ChEBI" id="CHEBI:29105"/>
    </cofactor>
    <text evidence="1">Binds 1 zinc ion per subunit.</text>
</comment>
<comment type="similarity">
    <text evidence="1">Belongs to the class-I aminoacyl-tRNA synthetase family. GluQ subfamily.</text>
</comment>
<keyword id="KW-0030">Aminoacyl-tRNA synthetase</keyword>
<keyword id="KW-0067">ATP-binding</keyword>
<keyword id="KW-0436">Ligase</keyword>
<keyword id="KW-0479">Metal-binding</keyword>
<keyword id="KW-0547">Nucleotide-binding</keyword>
<keyword id="KW-1185">Reference proteome</keyword>
<keyword id="KW-0862">Zinc</keyword>